<dbReference type="EC" id="2.5.1.15"/>
<dbReference type="EMBL" id="AE005674">
    <property type="protein sequence ID" value="AAN44683.2"/>
    <property type="status" value="ALT_INIT"/>
    <property type="molecule type" value="Genomic_DNA"/>
</dbReference>
<dbReference type="EMBL" id="AE014073">
    <property type="protein sequence ID" value="AAP18497.1"/>
    <property type="status" value="ALT_INIT"/>
    <property type="molecule type" value="Genomic_DNA"/>
</dbReference>
<dbReference type="RefSeq" id="NP_708976.4">
    <property type="nucleotide sequence ID" value="NC_004337.2"/>
</dbReference>
<dbReference type="RefSeq" id="WP_000764731.1">
    <property type="nucleotide sequence ID" value="NZ_WPGW01000004.1"/>
</dbReference>
<dbReference type="SMR" id="P0AC15"/>
<dbReference type="STRING" id="198214.SF3217"/>
<dbReference type="PaxDb" id="198214-SF3217"/>
<dbReference type="GeneID" id="1027106"/>
<dbReference type="GeneID" id="93778804"/>
<dbReference type="KEGG" id="sfl:SF3217"/>
<dbReference type="KEGG" id="sfx:S3435"/>
<dbReference type="PATRIC" id="fig|198214.7.peg.3817"/>
<dbReference type="HOGENOM" id="CLU_008023_0_3_6"/>
<dbReference type="UniPathway" id="UPA00077">
    <property type="reaction ID" value="UER00156"/>
</dbReference>
<dbReference type="Proteomes" id="UP000001006">
    <property type="component" value="Chromosome"/>
</dbReference>
<dbReference type="Proteomes" id="UP000002673">
    <property type="component" value="Chromosome"/>
</dbReference>
<dbReference type="GO" id="GO:0005829">
    <property type="term" value="C:cytosol"/>
    <property type="evidence" value="ECO:0007669"/>
    <property type="project" value="TreeGrafter"/>
</dbReference>
<dbReference type="GO" id="GO:0004156">
    <property type="term" value="F:dihydropteroate synthase activity"/>
    <property type="evidence" value="ECO:0007669"/>
    <property type="project" value="UniProtKB-EC"/>
</dbReference>
<dbReference type="GO" id="GO:0046872">
    <property type="term" value="F:metal ion binding"/>
    <property type="evidence" value="ECO:0007669"/>
    <property type="project" value="UniProtKB-KW"/>
</dbReference>
<dbReference type="GO" id="GO:0046656">
    <property type="term" value="P:folic acid biosynthetic process"/>
    <property type="evidence" value="ECO:0007669"/>
    <property type="project" value="UniProtKB-KW"/>
</dbReference>
<dbReference type="GO" id="GO:0046654">
    <property type="term" value="P:tetrahydrofolate biosynthetic process"/>
    <property type="evidence" value="ECO:0007669"/>
    <property type="project" value="UniProtKB-UniPathway"/>
</dbReference>
<dbReference type="CDD" id="cd00739">
    <property type="entry name" value="DHPS"/>
    <property type="match status" value="1"/>
</dbReference>
<dbReference type="FunFam" id="3.20.20.20:FF:000004">
    <property type="entry name" value="Dihydropteroate synthase"/>
    <property type="match status" value="1"/>
</dbReference>
<dbReference type="Gene3D" id="3.20.20.20">
    <property type="entry name" value="Dihydropteroate synthase-like"/>
    <property type="match status" value="1"/>
</dbReference>
<dbReference type="InterPro" id="IPR045031">
    <property type="entry name" value="DHP_synth-like"/>
</dbReference>
<dbReference type="InterPro" id="IPR006390">
    <property type="entry name" value="DHP_synth_dom"/>
</dbReference>
<dbReference type="InterPro" id="IPR011005">
    <property type="entry name" value="Dihydropteroate_synth-like_sf"/>
</dbReference>
<dbReference type="InterPro" id="IPR000489">
    <property type="entry name" value="Pterin-binding_dom"/>
</dbReference>
<dbReference type="NCBIfam" id="TIGR01496">
    <property type="entry name" value="DHPS"/>
    <property type="match status" value="1"/>
</dbReference>
<dbReference type="NCBIfam" id="NF008625">
    <property type="entry name" value="PRK11613.1"/>
    <property type="match status" value="1"/>
</dbReference>
<dbReference type="PANTHER" id="PTHR20941">
    <property type="entry name" value="FOLATE SYNTHESIS PROTEINS"/>
    <property type="match status" value="1"/>
</dbReference>
<dbReference type="PANTHER" id="PTHR20941:SF1">
    <property type="entry name" value="FOLIC ACID SYNTHESIS PROTEIN FOL1"/>
    <property type="match status" value="1"/>
</dbReference>
<dbReference type="Pfam" id="PF00809">
    <property type="entry name" value="Pterin_bind"/>
    <property type="match status" value="1"/>
</dbReference>
<dbReference type="SUPFAM" id="SSF51717">
    <property type="entry name" value="Dihydropteroate synthetase-like"/>
    <property type="match status" value="1"/>
</dbReference>
<dbReference type="PROSITE" id="PS00792">
    <property type="entry name" value="DHPS_1"/>
    <property type="match status" value="1"/>
</dbReference>
<dbReference type="PROSITE" id="PS00793">
    <property type="entry name" value="DHPS_2"/>
    <property type="match status" value="1"/>
</dbReference>
<dbReference type="PROSITE" id="PS50972">
    <property type="entry name" value="PTERIN_BINDING"/>
    <property type="match status" value="1"/>
</dbReference>
<keyword id="KW-0289">Folate biosynthesis</keyword>
<keyword id="KW-0460">Magnesium</keyword>
<keyword id="KW-0479">Metal-binding</keyword>
<keyword id="KW-1185">Reference proteome</keyword>
<keyword id="KW-0808">Transferase</keyword>
<name>DHPS_SHIFL</name>
<reference key="1">
    <citation type="journal article" date="2002" name="Nucleic Acids Res.">
        <title>Genome sequence of Shigella flexneri 2a: insights into pathogenicity through comparison with genomes of Escherichia coli K12 and O157.</title>
        <authorList>
            <person name="Jin Q."/>
            <person name="Yuan Z."/>
            <person name="Xu J."/>
            <person name="Wang Y."/>
            <person name="Shen Y."/>
            <person name="Lu W."/>
            <person name="Wang J."/>
            <person name="Liu H."/>
            <person name="Yang J."/>
            <person name="Yang F."/>
            <person name="Zhang X."/>
            <person name="Zhang J."/>
            <person name="Yang G."/>
            <person name="Wu H."/>
            <person name="Qu D."/>
            <person name="Dong J."/>
            <person name="Sun L."/>
            <person name="Xue Y."/>
            <person name="Zhao A."/>
            <person name="Gao Y."/>
            <person name="Zhu J."/>
            <person name="Kan B."/>
            <person name="Ding K."/>
            <person name="Chen S."/>
            <person name="Cheng H."/>
            <person name="Yao Z."/>
            <person name="He B."/>
            <person name="Chen R."/>
            <person name="Ma D."/>
            <person name="Qiang B."/>
            <person name="Wen Y."/>
            <person name="Hou Y."/>
            <person name="Yu J."/>
        </authorList>
    </citation>
    <scope>NUCLEOTIDE SEQUENCE [LARGE SCALE GENOMIC DNA]</scope>
    <source>
        <strain>301 / Serotype 2a</strain>
    </source>
</reference>
<reference key="2">
    <citation type="journal article" date="2003" name="Infect. Immun.">
        <title>Complete genome sequence and comparative genomics of Shigella flexneri serotype 2a strain 2457T.</title>
        <authorList>
            <person name="Wei J."/>
            <person name="Goldberg M.B."/>
            <person name="Burland V."/>
            <person name="Venkatesan M.M."/>
            <person name="Deng W."/>
            <person name="Fournier G."/>
            <person name="Mayhew G.F."/>
            <person name="Plunkett G. III"/>
            <person name="Rose D.J."/>
            <person name="Darling A."/>
            <person name="Mau B."/>
            <person name="Perna N.T."/>
            <person name="Payne S.M."/>
            <person name="Runyen-Janecky L.J."/>
            <person name="Zhou S."/>
            <person name="Schwartz D.C."/>
            <person name="Blattner F.R."/>
        </authorList>
    </citation>
    <scope>NUCLEOTIDE SEQUENCE [LARGE SCALE GENOMIC DNA]</scope>
    <source>
        <strain>ATCC 700930 / 2457T / Serotype 2a</strain>
    </source>
</reference>
<evidence type="ECO:0000250" key="1"/>
<evidence type="ECO:0000250" key="2">
    <source>
        <dbReference type="UniProtKB" id="P0AC13"/>
    </source>
</evidence>
<evidence type="ECO:0000250" key="3">
    <source>
        <dbReference type="UniProtKB" id="P9WND1"/>
    </source>
</evidence>
<evidence type="ECO:0000255" key="4">
    <source>
        <dbReference type="PROSITE-ProRule" id="PRU00334"/>
    </source>
</evidence>
<evidence type="ECO:0000305" key="5"/>
<accession>P0AC15</accession>
<accession>P26282</accession>
<accession>P78110</accession>
<feature type="chain" id="PRO_0000168209" description="Dihydropteroate synthase">
    <location>
        <begin position="1"/>
        <end position="282"/>
    </location>
</feature>
<feature type="domain" description="Pterin-binding" evidence="4">
    <location>
        <begin position="15"/>
        <end position="267"/>
    </location>
</feature>
<feature type="binding site" evidence="3">
    <location>
        <position position="22"/>
    </location>
    <ligand>
        <name>Mg(2+)</name>
        <dbReference type="ChEBI" id="CHEBI:18420"/>
    </ligand>
</feature>
<feature type="binding site" evidence="2">
    <location>
        <position position="62"/>
    </location>
    <ligand>
        <name>(7,8-dihydropterin-6-yl)methyl diphosphate</name>
        <dbReference type="ChEBI" id="CHEBI:72950"/>
    </ligand>
</feature>
<feature type="binding site" evidence="2">
    <location>
        <position position="96"/>
    </location>
    <ligand>
        <name>(7,8-dihydropterin-6-yl)methyl diphosphate</name>
        <dbReference type="ChEBI" id="CHEBI:72950"/>
    </ligand>
</feature>
<feature type="binding site" evidence="2">
    <location>
        <position position="115"/>
    </location>
    <ligand>
        <name>(7,8-dihydropterin-6-yl)methyl diphosphate</name>
        <dbReference type="ChEBI" id="CHEBI:72950"/>
    </ligand>
</feature>
<feature type="binding site" evidence="2">
    <location>
        <position position="185"/>
    </location>
    <ligand>
        <name>(7,8-dihydropterin-6-yl)methyl diphosphate</name>
        <dbReference type="ChEBI" id="CHEBI:72950"/>
    </ligand>
</feature>
<feature type="binding site" evidence="2">
    <location>
        <position position="221"/>
    </location>
    <ligand>
        <name>(7,8-dihydropterin-6-yl)methyl diphosphate</name>
        <dbReference type="ChEBI" id="CHEBI:72950"/>
    </ligand>
</feature>
<feature type="binding site" evidence="2">
    <location>
        <begin position="255"/>
        <end position="257"/>
    </location>
    <ligand>
        <name>(7,8-dihydropterin-6-yl)methyl diphosphate</name>
        <dbReference type="ChEBI" id="CHEBI:72950"/>
    </ligand>
</feature>
<organism>
    <name type="scientific">Shigella flexneri</name>
    <dbReference type="NCBI Taxonomy" id="623"/>
    <lineage>
        <taxon>Bacteria</taxon>
        <taxon>Pseudomonadati</taxon>
        <taxon>Pseudomonadota</taxon>
        <taxon>Gammaproteobacteria</taxon>
        <taxon>Enterobacterales</taxon>
        <taxon>Enterobacteriaceae</taxon>
        <taxon>Shigella</taxon>
    </lineage>
</organism>
<protein>
    <recommendedName>
        <fullName>Dihydropteroate synthase</fullName>
        <shortName>DHPS</shortName>
        <ecNumber>2.5.1.15</ecNumber>
    </recommendedName>
    <alternativeName>
        <fullName>Dihydropteroate pyrophosphorylase</fullName>
    </alternativeName>
</protein>
<proteinExistence type="inferred from homology"/>
<comment type="function">
    <text evidence="2">Catalyzes the condensation of para-aminobenzoate (pABA) with 6-hydroxymethyl-7,8-dihydropterin diphosphate (DHPt-PP) to form 7,8-dihydropteroate (H2Pte), the immediate precursor of folate derivatives.</text>
</comment>
<comment type="catalytic activity">
    <reaction evidence="2">
        <text>(7,8-dihydropterin-6-yl)methyl diphosphate + 4-aminobenzoate = 7,8-dihydropteroate + diphosphate</text>
        <dbReference type="Rhea" id="RHEA:19949"/>
        <dbReference type="ChEBI" id="CHEBI:17836"/>
        <dbReference type="ChEBI" id="CHEBI:17839"/>
        <dbReference type="ChEBI" id="CHEBI:33019"/>
        <dbReference type="ChEBI" id="CHEBI:72950"/>
        <dbReference type="EC" id="2.5.1.15"/>
    </reaction>
</comment>
<comment type="cofactor">
    <cofactor evidence="2">
        <name>Mg(2+)</name>
        <dbReference type="ChEBI" id="CHEBI:18420"/>
    </cofactor>
</comment>
<comment type="pathway">
    <text>Cofactor biosynthesis; tetrahydrofolate biosynthesis; 7,8-dihydrofolate from 2-amino-4-hydroxy-6-hydroxymethyl-7,8-dihydropteridine diphosphate and 4-aminobenzoate: step 1/2.</text>
</comment>
<comment type="subunit">
    <text evidence="1">Homodimer.</text>
</comment>
<comment type="similarity">
    <text evidence="5">Belongs to the DHPS family.</text>
</comment>
<comment type="sequence caution" evidence="5">
    <conflict type="erroneous initiation">
        <sequence resource="EMBL-CDS" id="AAN44683"/>
    </conflict>
    <text>Extended N-terminus.</text>
</comment>
<comment type="sequence caution" evidence="5">
    <conflict type="erroneous initiation">
        <sequence resource="EMBL-CDS" id="AAP18497"/>
    </conflict>
    <text>Extended N-terminus.</text>
</comment>
<gene>
    <name type="primary">folP</name>
    <name type="ordered locus">SF3217</name>
    <name type="ordered locus">S3435</name>
</gene>
<sequence>MKLFAQGTSLDLSHPHVMGILNVTPDSFSDGGTHNSLIDAVKHANLMINAGATIIDVGGESTRPGAAEVSVEEELQRVIPVVEAIAQRFEVWISVDTSKPEVIRESAKVGAHIINDIRSLSEPGALEAAAETGLPVCLMHMQGNPKTMQEAPKYDDVFAEVNRYFIEQIARCEQAGIAKEKLLLDPGFGFGKNLSHNYSLLARLAEFHHFNLPLLVGMSRKSMIGQLLNVGPSERLSGSLACAVIAAMQGAHIIRVHDVKETVEAMRVVEATLSAKENKRYE</sequence>